<proteinExistence type="inferred from homology"/>
<gene>
    <name evidence="1" type="primary">rplU</name>
    <name type="ordered locus">Saro_0929</name>
</gene>
<name>RL21_NOVAD</name>
<dbReference type="EMBL" id="CP000248">
    <property type="protein sequence ID" value="ABD25374.1"/>
    <property type="molecule type" value="Genomic_DNA"/>
</dbReference>
<dbReference type="RefSeq" id="WP_011444588.1">
    <property type="nucleotide sequence ID" value="NC_007794.1"/>
</dbReference>
<dbReference type="SMR" id="Q2G9U9"/>
<dbReference type="STRING" id="279238.Saro_0929"/>
<dbReference type="KEGG" id="nar:Saro_0929"/>
<dbReference type="eggNOG" id="COG0261">
    <property type="taxonomic scope" value="Bacteria"/>
</dbReference>
<dbReference type="HOGENOM" id="CLU_061463_3_2_5"/>
<dbReference type="Proteomes" id="UP000009134">
    <property type="component" value="Chromosome"/>
</dbReference>
<dbReference type="GO" id="GO:0005737">
    <property type="term" value="C:cytoplasm"/>
    <property type="evidence" value="ECO:0007669"/>
    <property type="project" value="UniProtKB-ARBA"/>
</dbReference>
<dbReference type="GO" id="GO:1990904">
    <property type="term" value="C:ribonucleoprotein complex"/>
    <property type="evidence" value="ECO:0007669"/>
    <property type="project" value="UniProtKB-KW"/>
</dbReference>
<dbReference type="GO" id="GO:0005840">
    <property type="term" value="C:ribosome"/>
    <property type="evidence" value="ECO:0007669"/>
    <property type="project" value="UniProtKB-KW"/>
</dbReference>
<dbReference type="GO" id="GO:0019843">
    <property type="term" value="F:rRNA binding"/>
    <property type="evidence" value="ECO:0007669"/>
    <property type="project" value="UniProtKB-UniRule"/>
</dbReference>
<dbReference type="GO" id="GO:0003735">
    <property type="term" value="F:structural constituent of ribosome"/>
    <property type="evidence" value="ECO:0007669"/>
    <property type="project" value="InterPro"/>
</dbReference>
<dbReference type="GO" id="GO:0006412">
    <property type="term" value="P:translation"/>
    <property type="evidence" value="ECO:0007669"/>
    <property type="project" value="UniProtKB-UniRule"/>
</dbReference>
<dbReference type="HAMAP" id="MF_01363">
    <property type="entry name" value="Ribosomal_bL21"/>
    <property type="match status" value="1"/>
</dbReference>
<dbReference type="InterPro" id="IPR028909">
    <property type="entry name" value="bL21-like"/>
</dbReference>
<dbReference type="InterPro" id="IPR036164">
    <property type="entry name" value="bL21-like_sf"/>
</dbReference>
<dbReference type="InterPro" id="IPR001787">
    <property type="entry name" value="Ribosomal_bL21"/>
</dbReference>
<dbReference type="NCBIfam" id="TIGR00061">
    <property type="entry name" value="L21"/>
    <property type="match status" value="1"/>
</dbReference>
<dbReference type="PANTHER" id="PTHR21349">
    <property type="entry name" value="50S RIBOSOMAL PROTEIN L21"/>
    <property type="match status" value="1"/>
</dbReference>
<dbReference type="PANTHER" id="PTHR21349:SF0">
    <property type="entry name" value="LARGE RIBOSOMAL SUBUNIT PROTEIN BL21M"/>
    <property type="match status" value="1"/>
</dbReference>
<dbReference type="Pfam" id="PF00829">
    <property type="entry name" value="Ribosomal_L21p"/>
    <property type="match status" value="1"/>
</dbReference>
<dbReference type="SUPFAM" id="SSF141091">
    <property type="entry name" value="L21p-like"/>
    <property type="match status" value="1"/>
</dbReference>
<protein>
    <recommendedName>
        <fullName evidence="1">Large ribosomal subunit protein bL21</fullName>
    </recommendedName>
    <alternativeName>
        <fullName evidence="2">50S ribosomal protein L21</fullName>
    </alternativeName>
</protein>
<feature type="chain" id="PRO_0000270701" description="Large ribosomal subunit protein bL21">
    <location>
        <begin position="1"/>
        <end position="98"/>
    </location>
</feature>
<sequence>MFAIVRTGGKQYRVAAGDKIAVEKLAGEAGDKITLGEVLLAGEGDSLADAAKVTVSAEIIAQAKSEKVIVFKKRRRHNYRRRNGHRQQMTLLRIVSVA</sequence>
<reference key="1">
    <citation type="submission" date="2006-01" db="EMBL/GenBank/DDBJ databases">
        <title>Complete sequence of Novosphingobium aromaticivorans DSM 12444.</title>
        <authorList>
            <consortium name="US DOE Joint Genome Institute"/>
            <person name="Copeland A."/>
            <person name="Lucas S."/>
            <person name="Lapidus A."/>
            <person name="Barry K."/>
            <person name="Detter J.C."/>
            <person name="Glavina T."/>
            <person name="Hammon N."/>
            <person name="Israni S."/>
            <person name="Pitluck S."/>
            <person name="Chain P."/>
            <person name="Malfatti S."/>
            <person name="Shin M."/>
            <person name="Vergez L."/>
            <person name="Schmutz J."/>
            <person name="Larimer F."/>
            <person name="Land M."/>
            <person name="Kyrpides N."/>
            <person name="Ivanova N."/>
            <person name="Fredrickson J."/>
            <person name="Balkwill D."/>
            <person name="Romine M.F."/>
            <person name="Richardson P."/>
        </authorList>
    </citation>
    <scope>NUCLEOTIDE SEQUENCE [LARGE SCALE GENOMIC DNA]</scope>
    <source>
        <strain>ATCC 700278 / DSM 12444 / CCUG 56034 / CIP 105152 / NBRC 16084 / F199</strain>
    </source>
</reference>
<comment type="function">
    <text evidence="1">This protein binds to 23S rRNA in the presence of protein L20.</text>
</comment>
<comment type="subunit">
    <text evidence="1">Part of the 50S ribosomal subunit. Contacts protein L20.</text>
</comment>
<comment type="similarity">
    <text evidence="1">Belongs to the bacterial ribosomal protein bL21 family.</text>
</comment>
<keyword id="KW-1185">Reference proteome</keyword>
<keyword id="KW-0687">Ribonucleoprotein</keyword>
<keyword id="KW-0689">Ribosomal protein</keyword>
<keyword id="KW-0694">RNA-binding</keyword>
<keyword id="KW-0699">rRNA-binding</keyword>
<accession>Q2G9U9</accession>
<evidence type="ECO:0000255" key="1">
    <source>
        <dbReference type="HAMAP-Rule" id="MF_01363"/>
    </source>
</evidence>
<evidence type="ECO:0000305" key="2"/>
<organism>
    <name type="scientific">Novosphingobium aromaticivorans (strain ATCC 700278 / DSM 12444 / CCUG 56034 / CIP 105152 / NBRC 16084 / F199)</name>
    <dbReference type="NCBI Taxonomy" id="279238"/>
    <lineage>
        <taxon>Bacteria</taxon>
        <taxon>Pseudomonadati</taxon>
        <taxon>Pseudomonadota</taxon>
        <taxon>Alphaproteobacteria</taxon>
        <taxon>Sphingomonadales</taxon>
        <taxon>Sphingomonadaceae</taxon>
        <taxon>Novosphingobium</taxon>
    </lineage>
</organism>